<organism>
    <name type="scientific">Saccharomyces cerevisiae (strain ATCC 204508 / S288c)</name>
    <name type="common">Baker's yeast</name>
    <dbReference type="NCBI Taxonomy" id="559292"/>
    <lineage>
        <taxon>Eukaryota</taxon>
        <taxon>Fungi</taxon>
        <taxon>Dikarya</taxon>
        <taxon>Ascomycota</taxon>
        <taxon>Saccharomycotina</taxon>
        <taxon>Saccharomycetes</taxon>
        <taxon>Saccharomycetales</taxon>
        <taxon>Saccharomycetaceae</taxon>
        <taxon>Saccharomyces</taxon>
    </lineage>
</organism>
<comment type="function">
    <text evidence="8">Component of the ribosome, a large ribonucleoprotein complex responsible for the synthesis of proteins in the cell. The small ribosomal subunit (SSU) binds messenger RNAs (mRNAs) and translates the encoded message by selecting cognate aminoacyl-transfer RNA (tRNA) molecules. The large subunit (LSU) contains the ribosomal catalytic site termed the peptidyl transferase center (PTC), which catalyzes the formation of peptide bonds, thereby polymerizing the amino acids delivered by tRNAs into a polypeptide chain. The nascent polypeptides leave the ribosome through a tunnel in the LSU and interact with protein factors that function in enzymatic processing, targeting, and the membrane insertion of nascent chains at the exit of the ribosomal tunnel.</text>
</comment>
<comment type="subunit">
    <text evidence="4 9">Component of the large ribosomal subunit (LSU). Mature yeast ribosomes consist of a small (40S) and a large (60S) subunit. The 40S small subunit contains 1 molecule of ribosomal RNA (18S rRNA) and 33 different proteins (encoded by 57 genes). The large 60S subunit contains 3 rRNA molecules (25S, 5.8S and 5S rRNA) and 46 different proteins (encoded by 81 genes) (PubMed:22096102, PubMed:9559554).</text>
</comment>
<comment type="subcellular location">
    <subcellularLocation>
        <location evidence="2 4">Cytoplasm</location>
    </subcellularLocation>
</comment>
<comment type="mass spectrometry">
    <text>Monoisotopic mass.</text>
</comment>
<comment type="miscellaneous">
    <text evidence="3">Present with 44600 molecules/cell in log phase SD medium.</text>
</comment>
<comment type="miscellaneous">
    <text evidence="7">There are 2 genes for eL43 in yeast.</text>
</comment>
<comment type="similarity">
    <text evidence="7">Belongs to the eukaryotic ribosomal protein eL43 family.</text>
</comment>
<name>RL43A_YEAST</name>
<feature type="initiator methionine" description="Removed" evidence="1">
    <location>
        <position position="1"/>
    </location>
</feature>
<feature type="chain" id="PRO_0000139838" description="Large ribosomal subunit protein eL43A">
    <location>
        <begin position="2"/>
        <end position="92"/>
    </location>
</feature>
<feature type="zinc finger region" description="C4-type">
    <location>
        <begin position="39"/>
        <end position="60"/>
    </location>
</feature>
<feature type="modified residue" description="Phosphoserine" evidence="10">
    <location>
        <position position="40"/>
    </location>
</feature>
<feature type="helix" evidence="11">
    <location>
        <begin position="9"/>
        <end position="14"/>
    </location>
</feature>
<feature type="turn" evidence="11">
    <location>
        <begin position="15"/>
        <end position="18"/>
    </location>
</feature>
<feature type="helix" evidence="11">
    <location>
        <begin position="20"/>
        <end position="34"/>
    </location>
</feature>
<feature type="turn" evidence="11">
    <location>
        <begin position="40"/>
        <end position="42"/>
    </location>
</feature>
<feature type="strand" evidence="11">
    <location>
        <begin position="44"/>
        <end position="49"/>
    </location>
</feature>
<feature type="strand" evidence="11">
    <location>
        <begin position="54"/>
        <end position="57"/>
    </location>
</feature>
<feature type="turn" evidence="11">
    <location>
        <begin position="58"/>
        <end position="60"/>
    </location>
</feature>
<feature type="strand" evidence="11">
    <location>
        <begin position="63"/>
        <end position="65"/>
    </location>
</feature>
<feature type="strand" evidence="11">
    <location>
        <begin position="68"/>
        <end position="72"/>
    </location>
</feature>
<feature type="helix" evidence="11">
    <location>
        <begin position="74"/>
        <end position="91"/>
    </location>
</feature>
<evidence type="ECO:0000269" key="1">
    <source>
    </source>
</evidence>
<evidence type="ECO:0000269" key="2">
    <source>
    </source>
</evidence>
<evidence type="ECO:0000269" key="3">
    <source>
    </source>
</evidence>
<evidence type="ECO:0000269" key="4">
    <source>
    </source>
</evidence>
<evidence type="ECO:0000303" key="5">
    <source>
    </source>
</evidence>
<evidence type="ECO:0000303" key="6">
    <source>
    </source>
</evidence>
<evidence type="ECO:0000305" key="7"/>
<evidence type="ECO:0000305" key="8">
    <source>
    </source>
</evidence>
<evidence type="ECO:0000305" key="9">
    <source>
    </source>
</evidence>
<evidence type="ECO:0007744" key="10">
    <source>
    </source>
</evidence>
<evidence type="ECO:0007829" key="11">
    <source>
        <dbReference type="PDB" id="4U4R"/>
    </source>
</evidence>
<proteinExistence type="evidence at protein level"/>
<dbReference type="EMBL" id="Z73616">
    <property type="protein sequence ID" value="CAA97993.1"/>
    <property type="molecule type" value="Genomic_DNA"/>
</dbReference>
<dbReference type="EMBL" id="Z71255">
    <property type="protein sequence ID" value="CAA94991.1"/>
    <property type="molecule type" value="Genomic_DNA"/>
</dbReference>
<dbReference type="EMBL" id="Z49219">
    <property type="protein sequence ID" value="CAA89164.1"/>
    <property type="molecule type" value="Genomic_DNA"/>
</dbReference>
<dbReference type="EMBL" id="BK006949">
    <property type="protein sequence ID" value="DAA11468.1"/>
    <property type="molecule type" value="Genomic_DNA"/>
</dbReference>
<dbReference type="PIR" id="S54068">
    <property type="entry name" value="S54068"/>
</dbReference>
<dbReference type="RefSeq" id="NP_015368.1">
    <property type="nucleotide sequence ID" value="NM_001184140.1"/>
</dbReference>
<dbReference type="PDB" id="3J6X">
    <property type="method" value="EM"/>
    <property type="resolution" value="6.10 A"/>
    <property type="chains" value="83=1-92"/>
</dbReference>
<dbReference type="PDB" id="3J6Y">
    <property type="method" value="EM"/>
    <property type="resolution" value="6.10 A"/>
    <property type="chains" value="83=1-92"/>
</dbReference>
<dbReference type="PDB" id="3J77">
    <property type="method" value="EM"/>
    <property type="resolution" value="6.20 A"/>
    <property type="chains" value="93=1-92"/>
</dbReference>
<dbReference type="PDB" id="3J78">
    <property type="method" value="EM"/>
    <property type="resolution" value="6.30 A"/>
    <property type="chains" value="93=1-92"/>
</dbReference>
<dbReference type="PDB" id="3JCT">
    <property type="method" value="EM"/>
    <property type="resolution" value="3.08 A"/>
    <property type="chains" value="p=1-92"/>
</dbReference>
<dbReference type="PDB" id="4U3M">
    <property type="method" value="X-ray"/>
    <property type="resolution" value="3.00 A"/>
    <property type="chains" value="Q3/q3=2-92"/>
</dbReference>
<dbReference type="PDB" id="4U3N">
    <property type="method" value="X-ray"/>
    <property type="resolution" value="3.20 A"/>
    <property type="chains" value="Q3/q3=2-92"/>
</dbReference>
<dbReference type="PDB" id="4U3U">
    <property type="method" value="X-ray"/>
    <property type="resolution" value="2.90 A"/>
    <property type="chains" value="Q3/q3=2-92"/>
</dbReference>
<dbReference type="PDB" id="4U4N">
    <property type="method" value="X-ray"/>
    <property type="resolution" value="3.10 A"/>
    <property type="chains" value="Q3/q3=2-92"/>
</dbReference>
<dbReference type="PDB" id="4U4O">
    <property type="method" value="X-ray"/>
    <property type="resolution" value="3.60 A"/>
    <property type="chains" value="Q3/q3=2-92"/>
</dbReference>
<dbReference type="PDB" id="4U4Q">
    <property type="method" value="X-ray"/>
    <property type="resolution" value="3.00 A"/>
    <property type="chains" value="Q3/q3=2-92"/>
</dbReference>
<dbReference type="PDB" id="4U4R">
    <property type="method" value="X-ray"/>
    <property type="resolution" value="2.80 A"/>
    <property type="chains" value="Q3/q3=2-92"/>
</dbReference>
<dbReference type="PDB" id="4U4U">
    <property type="method" value="X-ray"/>
    <property type="resolution" value="3.00 A"/>
    <property type="chains" value="Q3/q3=2-92"/>
</dbReference>
<dbReference type="PDB" id="4U4Y">
    <property type="method" value="X-ray"/>
    <property type="resolution" value="3.20 A"/>
    <property type="chains" value="Q3/q3=2-92"/>
</dbReference>
<dbReference type="PDB" id="4U4Z">
    <property type="method" value="X-ray"/>
    <property type="resolution" value="3.10 A"/>
    <property type="chains" value="Q3/q3=2-92"/>
</dbReference>
<dbReference type="PDB" id="4U50">
    <property type="method" value="X-ray"/>
    <property type="resolution" value="3.20 A"/>
    <property type="chains" value="Q3/q3=2-92"/>
</dbReference>
<dbReference type="PDB" id="4U51">
    <property type="method" value="X-ray"/>
    <property type="resolution" value="3.20 A"/>
    <property type="chains" value="Q3/q3=2-92"/>
</dbReference>
<dbReference type="PDB" id="4U52">
    <property type="method" value="X-ray"/>
    <property type="resolution" value="3.00 A"/>
    <property type="chains" value="Q3/q3=2-92"/>
</dbReference>
<dbReference type="PDB" id="4U53">
    <property type="method" value="X-ray"/>
    <property type="resolution" value="3.30 A"/>
    <property type="chains" value="Q3/q3=2-92"/>
</dbReference>
<dbReference type="PDB" id="4U55">
    <property type="method" value="X-ray"/>
    <property type="resolution" value="3.20 A"/>
    <property type="chains" value="Q3/q3=2-92"/>
</dbReference>
<dbReference type="PDB" id="4U56">
    <property type="method" value="X-ray"/>
    <property type="resolution" value="3.45 A"/>
    <property type="chains" value="Q3/q3=2-92"/>
</dbReference>
<dbReference type="PDB" id="4U6F">
    <property type="method" value="X-ray"/>
    <property type="resolution" value="3.10 A"/>
    <property type="chains" value="Q3/q3=2-92"/>
</dbReference>
<dbReference type="PDB" id="4V4B">
    <property type="method" value="EM"/>
    <property type="resolution" value="11.70 A"/>
    <property type="chains" value="B9=2-92"/>
</dbReference>
<dbReference type="PDB" id="4V5Z">
    <property type="method" value="EM"/>
    <property type="resolution" value="8.70 A"/>
    <property type="chains" value="Bz=1-89"/>
</dbReference>
<dbReference type="PDB" id="4V6I">
    <property type="method" value="EM"/>
    <property type="resolution" value="8.80 A"/>
    <property type="chains" value="Bm=1-92"/>
</dbReference>
<dbReference type="PDB" id="4V7F">
    <property type="method" value="EM"/>
    <property type="resolution" value="8.70 A"/>
    <property type="chains" value="k=1-92"/>
</dbReference>
<dbReference type="PDB" id="4V7R">
    <property type="method" value="X-ray"/>
    <property type="resolution" value="4.00 A"/>
    <property type="chains" value="Bg/Dg=1-92"/>
</dbReference>
<dbReference type="PDB" id="4V88">
    <property type="method" value="X-ray"/>
    <property type="resolution" value="3.00 A"/>
    <property type="chains" value="Bp/Dp=1-92"/>
</dbReference>
<dbReference type="PDB" id="4V8T">
    <property type="method" value="EM"/>
    <property type="resolution" value="8.10 A"/>
    <property type="chains" value="p=1-92"/>
</dbReference>
<dbReference type="PDB" id="4V91">
    <property type="method" value="EM"/>
    <property type="resolution" value="3.70 A"/>
    <property type="chains" value="p=1-92"/>
</dbReference>
<dbReference type="PDB" id="5APN">
    <property type="method" value="EM"/>
    <property type="resolution" value="3.91 A"/>
    <property type="chains" value="p=1-92"/>
</dbReference>
<dbReference type="PDB" id="5APO">
    <property type="method" value="EM"/>
    <property type="resolution" value="3.41 A"/>
    <property type="chains" value="p=1-92"/>
</dbReference>
<dbReference type="PDB" id="5DAT">
    <property type="method" value="X-ray"/>
    <property type="resolution" value="3.15 A"/>
    <property type="chains" value="Q3/q3=2-92"/>
</dbReference>
<dbReference type="PDB" id="5DC3">
    <property type="method" value="X-ray"/>
    <property type="resolution" value="3.25 A"/>
    <property type="chains" value="Q3/q3=2-92"/>
</dbReference>
<dbReference type="PDB" id="5DGE">
    <property type="method" value="X-ray"/>
    <property type="resolution" value="3.45 A"/>
    <property type="chains" value="Q3/q3=2-92"/>
</dbReference>
<dbReference type="PDB" id="5DGF">
    <property type="method" value="X-ray"/>
    <property type="resolution" value="3.30 A"/>
    <property type="chains" value="Q3/q3=2-92"/>
</dbReference>
<dbReference type="PDB" id="5DGV">
    <property type="method" value="X-ray"/>
    <property type="resolution" value="3.10 A"/>
    <property type="chains" value="Q3/q3=2-92"/>
</dbReference>
<dbReference type="PDB" id="5FCI">
    <property type="method" value="X-ray"/>
    <property type="resolution" value="3.40 A"/>
    <property type="chains" value="Q3/q3=2-92"/>
</dbReference>
<dbReference type="PDB" id="5FCJ">
    <property type="method" value="X-ray"/>
    <property type="resolution" value="3.10 A"/>
    <property type="chains" value="Q3/q3=2-92"/>
</dbReference>
<dbReference type="PDB" id="5GAK">
    <property type="method" value="EM"/>
    <property type="resolution" value="3.88 A"/>
    <property type="chains" value="D=1-92"/>
</dbReference>
<dbReference type="PDB" id="5H4P">
    <property type="method" value="EM"/>
    <property type="resolution" value="3.07 A"/>
    <property type="chains" value="p=1-92"/>
</dbReference>
<dbReference type="PDB" id="5I4L">
    <property type="method" value="X-ray"/>
    <property type="resolution" value="3.10 A"/>
    <property type="chains" value="Q3/q3=2-92"/>
</dbReference>
<dbReference type="PDB" id="5JCS">
    <property type="method" value="EM"/>
    <property type="resolution" value="9.50 A"/>
    <property type="chains" value="p=1-92"/>
</dbReference>
<dbReference type="PDB" id="5JUO">
    <property type="method" value="EM"/>
    <property type="resolution" value="4.00 A"/>
    <property type="chains" value="UA=1-92"/>
</dbReference>
<dbReference type="PDB" id="5JUP">
    <property type="method" value="EM"/>
    <property type="resolution" value="3.50 A"/>
    <property type="chains" value="UA=1-92"/>
</dbReference>
<dbReference type="PDB" id="5JUS">
    <property type="method" value="EM"/>
    <property type="resolution" value="4.20 A"/>
    <property type="chains" value="UA=1-92"/>
</dbReference>
<dbReference type="PDB" id="5JUT">
    <property type="method" value="EM"/>
    <property type="resolution" value="4.00 A"/>
    <property type="chains" value="UA=1-92"/>
</dbReference>
<dbReference type="PDB" id="5JUU">
    <property type="method" value="EM"/>
    <property type="resolution" value="4.00 A"/>
    <property type="chains" value="UA=1-92"/>
</dbReference>
<dbReference type="PDB" id="5LYB">
    <property type="method" value="X-ray"/>
    <property type="resolution" value="3.25 A"/>
    <property type="chains" value="Q3/q3=2-92"/>
</dbReference>
<dbReference type="PDB" id="5MC6">
    <property type="method" value="EM"/>
    <property type="resolution" value="3.80 A"/>
    <property type="chains" value="AT=1-92"/>
</dbReference>
<dbReference type="PDB" id="5MEI">
    <property type="method" value="X-ray"/>
    <property type="resolution" value="3.50 A"/>
    <property type="chains" value="AQ/DR=2-92"/>
</dbReference>
<dbReference type="PDB" id="5NDG">
    <property type="method" value="X-ray"/>
    <property type="resolution" value="3.70 A"/>
    <property type="chains" value="Q3/q3=2-92"/>
</dbReference>
<dbReference type="PDB" id="5NDV">
    <property type="method" value="X-ray"/>
    <property type="resolution" value="3.30 A"/>
    <property type="chains" value="Q3/q3=2-92"/>
</dbReference>
<dbReference type="PDB" id="5NDW">
    <property type="method" value="X-ray"/>
    <property type="resolution" value="3.70 A"/>
    <property type="chains" value="Q3/q3=2-92"/>
</dbReference>
<dbReference type="PDB" id="5OBM">
    <property type="method" value="X-ray"/>
    <property type="resolution" value="3.40 A"/>
    <property type="chains" value="Q3/q3=2-92"/>
</dbReference>
<dbReference type="PDB" id="5ON6">
    <property type="method" value="X-ray"/>
    <property type="resolution" value="3.10 A"/>
    <property type="chains" value="AQ/DR=2-92"/>
</dbReference>
<dbReference type="PDB" id="5T62">
    <property type="method" value="EM"/>
    <property type="resolution" value="3.30 A"/>
    <property type="chains" value="R=1-92"/>
</dbReference>
<dbReference type="PDB" id="5T6R">
    <property type="method" value="EM"/>
    <property type="resolution" value="4.50 A"/>
    <property type="chains" value="R=1-92"/>
</dbReference>
<dbReference type="PDB" id="5TBW">
    <property type="method" value="X-ray"/>
    <property type="resolution" value="3.00 A"/>
    <property type="chains" value="AQ/DR=2-92"/>
</dbReference>
<dbReference type="PDB" id="5TGA">
    <property type="method" value="X-ray"/>
    <property type="resolution" value="3.30 A"/>
    <property type="chains" value="Q3/q3=2-92"/>
</dbReference>
<dbReference type="PDB" id="5TGM">
    <property type="method" value="X-ray"/>
    <property type="resolution" value="3.50 A"/>
    <property type="chains" value="Q3/q3=2-92"/>
</dbReference>
<dbReference type="PDB" id="6FT6">
    <property type="method" value="EM"/>
    <property type="resolution" value="3.90 A"/>
    <property type="chains" value="p=1-92"/>
</dbReference>
<dbReference type="PDB" id="6GQ1">
    <property type="method" value="EM"/>
    <property type="resolution" value="4.40 A"/>
    <property type="chains" value="p=2-92"/>
</dbReference>
<dbReference type="PDB" id="6GQB">
    <property type="method" value="EM"/>
    <property type="resolution" value="3.90 A"/>
    <property type="chains" value="p=2-92"/>
</dbReference>
<dbReference type="PDB" id="6GQV">
    <property type="method" value="EM"/>
    <property type="resolution" value="4.00 A"/>
    <property type="chains" value="p=2-92"/>
</dbReference>
<dbReference type="PDB" id="6HD7">
    <property type="method" value="EM"/>
    <property type="resolution" value="3.40 A"/>
    <property type="chains" value="D=1-92"/>
</dbReference>
<dbReference type="PDB" id="6HHQ">
    <property type="method" value="X-ray"/>
    <property type="resolution" value="3.10 A"/>
    <property type="chains" value="AQ/DR=1-92"/>
</dbReference>
<dbReference type="PDB" id="6I7O">
    <property type="method" value="EM"/>
    <property type="resolution" value="5.30 A"/>
    <property type="chains" value="AT/XT=2-92"/>
</dbReference>
<dbReference type="PDB" id="6M62">
    <property type="method" value="EM"/>
    <property type="resolution" value="3.20 A"/>
    <property type="chains" value="p=1-92"/>
</dbReference>
<dbReference type="PDB" id="6N8J">
    <property type="method" value="EM"/>
    <property type="resolution" value="3.50 A"/>
    <property type="chains" value="p=1-92"/>
</dbReference>
<dbReference type="PDB" id="6N8K">
    <property type="method" value="EM"/>
    <property type="resolution" value="3.60 A"/>
    <property type="chains" value="p=1-92"/>
</dbReference>
<dbReference type="PDB" id="6N8L">
    <property type="method" value="EM"/>
    <property type="resolution" value="3.60 A"/>
    <property type="chains" value="p=1-92"/>
</dbReference>
<dbReference type="PDB" id="6N8M">
    <property type="method" value="EM"/>
    <property type="resolution" value="3.50 A"/>
    <property type="chains" value="R=1-92"/>
</dbReference>
<dbReference type="PDB" id="6N8N">
    <property type="method" value="EM"/>
    <property type="resolution" value="3.80 A"/>
    <property type="chains" value="R=1-92"/>
</dbReference>
<dbReference type="PDB" id="6N8O">
    <property type="method" value="EM"/>
    <property type="resolution" value="3.50 A"/>
    <property type="chains" value="R=1-92"/>
</dbReference>
<dbReference type="PDB" id="6OIG">
    <property type="method" value="EM"/>
    <property type="resolution" value="3.80 A"/>
    <property type="chains" value="p=2-92"/>
</dbReference>
<dbReference type="PDB" id="6Q8Y">
    <property type="method" value="EM"/>
    <property type="resolution" value="3.10 A"/>
    <property type="chains" value="AT=2-92"/>
</dbReference>
<dbReference type="PDB" id="6QIK">
    <property type="method" value="EM"/>
    <property type="resolution" value="3.10 A"/>
    <property type="chains" value="m=1-92"/>
</dbReference>
<dbReference type="PDB" id="6QT0">
    <property type="method" value="EM"/>
    <property type="resolution" value="3.40 A"/>
    <property type="chains" value="m=1-92"/>
</dbReference>
<dbReference type="PDB" id="6QTZ">
    <property type="method" value="EM"/>
    <property type="resolution" value="3.50 A"/>
    <property type="chains" value="m=1-92"/>
</dbReference>
<dbReference type="PDB" id="6R84">
    <property type="method" value="EM"/>
    <property type="resolution" value="3.60 A"/>
    <property type="chains" value="D=2-92"/>
</dbReference>
<dbReference type="PDB" id="6R86">
    <property type="method" value="EM"/>
    <property type="resolution" value="3.40 A"/>
    <property type="chains" value="D=2-92"/>
</dbReference>
<dbReference type="PDB" id="6R87">
    <property type="method" value="EM"/>
    <property type="resolution" value="3.40 A"/>
    <property type="chains" value="D=2-92"/>
</dbReference>
<dbReference type="PDB" id="6RI5">
    <property type="method" value="EM"/>
    <property type="resolution" value="3.30 A"/>
    <property type="chains" value="m=1-92"/>
</dbReference>
<dbReference type="PDB" id="6RZZ">
    <property type="method" value="EM"/>
    <property type="resolution" value="3.20 A"/>
    <property type="chains" value="m=1-92"/>
</dbReference>
<dbReference type="PDB" id="6S05">
    <property type="method" value="EM"/>
    <property type="resolution" value="3.90 A"/>
    <property type="chains" value="m=1-92"/>
</dbReference>
<dbReference type="PDB" id="6S47">
    <property type="method" value="EM"/>
    <property type="resolution" value="3.28 A"/>
    <property type="chains" value="Ar=2-92"/>
</dbReference>
<dbReference type="PDB" id="6SNT">
    <property type="method" value="EM"/>
    <property type="resolution" value="2.80 A"/>
    <property type="chains" value="aa=1-92"/>
</dbReference>
<dbReference type="PDB" id="6SV4">
    <property type="method" value="EM"/>
    <property type="resolution" value="3.30 A"/>
    <property type="chains" value="AT/XT/zT=1-92"/>
</dbReference>
<dbReference type="PDB" id="6T4Q">
    <property type="method" value="EM"/>
    <property type="resolution" value="2.60 A"/>
    <property type="chains" value="Lp=2-92"/>
</dbReference>
<dbReference type="PDB" id="6T7I">
    <property type="method" value="EM"/>
    <property type="resolution" value="3.20 A"/>
    <property type="chains" value="Lp=1-92"/>
</dbReference>
<dbReference type="PDB" id="6T7T">
    <property type="method" value="EM"/>
    <property type="resolution" value="3.10 A"/>
    <property type="chains" value="Lp=1-92"/>
</dbReference>
<dbReference type="PDB" id="6T83">
    <property type="method" value="EM"/>
    <property type="resolution" value="4.00 A"/>
    <property type="chains" value="aa/pb=1-92"/>
</dbReference>
<dbReference type="PDB" id="6TB3">
    <property type="method" value="EM"/>
    <property type="resolution" value="2.80 A"/>
    <property type="chains" value="AT=2-92"/>
</dbReference>
<dbReference type="PDB" id="6TNU">
    <property type="method" value="EM"/>
    <property type="resolution" value="3.10 A"/>
    <property type="chains" value="AT=2-92"/>
</dbReference>
<dbReference type="PDB" id="6WOO">
    <property type="method" value="EM"/>
    <property type="resolution" value="2.90 A"/>
    <property type="chains" value="p=3-89"/>
</dbReference>
<dbReference type="PDB" id="6XIQ">
    <property type="method" value="EM"/>
    <property type="resolution" value="4.20 A"/>
    <property type="chains" value="p=1-92"/>
</dbReference>
<dbReference type="PDB" id="6XIR">
    <property type="method" value="EM"/>
    <property type="resolution" value="3.20 A"/>
    <property type="chains" value="p=1-92"/>
</dbReference>
<dbReference type="PDB" id="6YLG">
    <property type="method" value="EM"/>
    <property type="resolution" value="3.00 A"/>
    <property type="chains" value="p=1-92"/>
</dbReference>
<dbReference type="PDB" id="6YLH">
    <property type="method" value="EM"/>
    <property type="resolution" value="3.10 A"/>
    <property type="chains" value="p=1-92"/>
</dbReference>
<dbReference type="PDB" id="6YLY">
    <property type="method" value="EM"/>
    <property type="resolution" value="3.80 A"/>
    <property type="chains" value="p=1-92"/>
</dbReference>
<dbReference type="PDB" id="6Z6J">
    <property type="method" value="EM"/>
    <property type="resolution" value="3.40 A"/>
    <property type="chains" value="Lp=1-92"/>
</dbReference>
<dbReference type="PDB" id="6Z6K">
    <property type="method" value="EM"/>
    <property type="resolution" value="3.40 A"/>
    <property type="chains" value="Lp=1-92"/>
</dbReference>
<dbReference type="PDB" id="7AZY">
    <property type="method" value="EM"/>
    <property type="resolution" value="2.88 A"/>
    <property type="chains" value="U=1-92"/>
</dbReference>
<dbReference type="PDB" id="7B7D">
    <property type="method" value="EM"/>
    <property type="resolution" value="3.30 A"/>
    <property type="chains" value="Ll=2-92"/>
</dbReference>
<dbReference type="PDB" id="7BT6">
    <property type="method" value="EM"/>
    <property type="resolution" value="3.12 A"/>
    <property type="chains" value="p=1-92"/>
</dbReference>
<dbReference type="PDB" id="7BTB">
    <property type="method" value="EM"/>
    <property type="resolution" value="3.22 A"/>
    <property type="chains" value="p=1-92"/>
</dbReference>
<dbReference type="PDB" id="7MPI">
    <property type="method" value="EM"/>
    <property type="resolution" value="3.05 A"/>
    <property type="chains" value="Ap=2-92"/>
</dbReference>
<dbReference type="PDB" id="7MPJ">
    <property type="method" value="EM"/>
    <property type="resolution" value="2.70 A"/>
    <property type="chains" value="Ap=2-92"/>
</dbReference>
<dbReference type="PDB" id="7N8B">
    <property type="method" value="EM"/>
    <property type="resolution" value="3.05 A"/>
    <property type="chains" value="Ap=2-92"/>
</dbReference>
<dbReference type="PDB" id="7NRC">
    <property type="method" value="EM"/>
    <property type="resolution" value="3.90 A"/>
    <property type="chains" value="Lr=2-92"/>
</dbReference>
<dbReference type="PDB" id="7NRD">
    <property type="method" value="EM"/>
    <property type="resolution" value="4.36 A"/>
    <property type="chains" value="Lr=2-92"/>
</dbReference>
<dbReference type="PDB" id="7OF1">
    <property type="method" value="EM"/>
    <property type="resolution" value="3.10 A"/>
    <property type="chains" value="p=1-92"/>
</dbReference>
<dbReference type="PDB" id="7OH3">
    <property type="method" value="EM"/>
    <property type="resolution" value="3.40 A"/>
    <property type="chains" value="p=1-92"/>
</dbReference>
<dbReference type="PDB" id="7OHQ">
    <property type="method" value="EM"/>
    <property type="resolution" value="3.10 A"/>
    <property type="chains" value="p=1-92"/>
</dbReference>
<dbReference type="PDB" id="7OSA">
    <property type="method" value="X-ray"/>
    <property type="resolution" value="3.00 A"/>
    <property type="chains" value="eL43=1-92"/>
</dbReference>
<dbReference type="PDB" id="7OSM">
    <property type="method" value="X-ray"/>
    <property type="resolution" value="3.00 A"/>
    <property type="chains" value="eL43=1-92"/>
</dbReference>
<dbReference type="PDB" id="7RR5">
    <property type="method" value="EM"/>
    <property type="resolution" value="3.23 A"/>
    <property type="chains" value="Lp=1-92"/>
</dbReference>
<dbReference type="PDB" id="7TOO">
    <property type="method" value="EM"/>
    <property type="resolution" value="2.70 A"/>
    <property type="chains" value="AL43=1-92"/>
</dbReference>
<dbReference type="PDB" id="7TOP">
    <property type="method" value="EM"/>
    <property type="resolution" value="2.40 A"/>
    <property type="chains" value="AL43=1-92"/>
</dbReference>
<dbReference type="PDB" id="7U0H">
    <property type="method" value="EM"/>
    <property type="resolution" value="2.76 A"/>
    <property type="chains" value="p=1-92"/>
</dbReference>
<dbReference type="PDB" id="7UG6">
    <property type="method" value="EM"/>
    <property type="resolution" value="2.90 A"/>
    <property type="chains" value="p=1-92"/>
</dbReference>
<dbReference type="PDB" id="7UOO">
    <property type="method" value="EM"/>
    <property type="resolution" value="2.34 A"/>
    <property type="chains" value="p=1-92"/>
</dbReference>
<dbReference type="PDB" id="7UQB">
    <property type="method" value="EM"/>
    <property type="resolution" value="2.43 A"/>
    <property type="chains" value="p=1-92"/>
</dbReference>
<dbReference type="PDB" id="7UQZ">
    <property type="method" value="EM"/>
    <property type="resolution" value="2.44 A"/>
    <property type="chains" value="p=1-92"/>
</dbReference>
<dbReference type="PDB" id="7V08">
    <property type="method" value="EM"/>
    <property type="resolution" value="2.36 A"/>
    <property type="chains" value="p=1-92"/>
</dbReference>
<dbReference type="PDB" id="7Z34">
    <property type="method" value="EM"/>
    <property type="resolution" value="3.80 A"/>
    <property type="chains" value="p=1-92"/>
</dbReference>
<dbReference type="PDB" id="7ZPQ">
    <property type="method" value="EM"/>
    <property type="resolution" value="3.47 A"/>
    <property type="chains" value="Bo=2-92"/>
</dbReference>
<dbReference type="PDB" id="7ZRS">
    <property type="method" value="EM"/>
    <property type="resolution" value="4.80 A"/>
    <property type="chains" value="Bo=2-92"/>
</dbReference>
<dbReference type="PDB" id="7ZS5">
    <property type="method" value="EM"/>
    <property type="resolution" value="3.20 A"/>
    <property type="chains" value="BB=2-92"/>
</dbReference>
<dbReference type="PDB" id="7ZUW">
    <property type="method" value="EM"/>
    <property type="resolution" value="4.30 A"/>
    <property type="chains" value="Bo=2-92"/>
</dbReference>
<dbReference type="PDB" id="7ZUX">
    <property type="method" value="EM"/>
    <property type="resolution" value="2.50 A"/>
    <property type="chains" value="Eo=2-92"/>
</dbReference>
<dbReference type="PDB" id="7ZW0">
    <property type="method" value="EM"/>
    <property type="resolution" value="2.40 A"/>
    <property type="chains" value="Ls=1-92"/>
</dbReference>
<dbReference type="PDB" id="8AAF">
    <property type="method" value="EM"/>
    <property type="resolution" value="2.50 A"/>
    <property type="chains" value="c=1-92"/>
</dbReference>
<dbReference type="PDB" id="8AGT">
    <property type="method" value="EM"/>
    <property type="resolution" value="2.60 A"/>
    <property type="chains" value="c=1-92"/>
</dbReference>
<dbReference type="PDB" id="8AGU">
    <property type="method" value="EM"/>
    <property type="resolution" value="2.70 A"/>
    <property type="chains" value="c=1-92"/>
</dbReference>
<dbReference type="PDB" id="8AGV">
    <property type="method" value="EM"/>
    <property type="resolution" value="2.60 A"/>
    <property type="chains" value="c=1-92"/>
</dbReference>
<dbReference type="PDB" id="8AGW">
    <property type="method" value="EM"/>
    <property type="resolution" value="2.60 A"/>
    <property type="chains" value="c=1-92"/>
</dbReference>
<dbReference type="PDB" id="8AGX">
    <property type="method" value="EM"/>
    <property type="resolution" value="2.40 A"/>
    <property type="chains" value="c=1-92"/>
</dbReference>
<dbReference type="PDB" id="8AGZ">
    <property type="method" value="EM"/>
    <property type="resolution" value="2.60 A"/>
    <property type="chains" value="c=1-92"/>
</dbReference>
<dbReference type="PDB" id="8BIP">
    <property type="method" value="EM"/>
    <property type="resolution" value="3.10 A"/>
    <property type="chains" value="Lp=2-92"/>
</dbReference>
<dbReference type="PDB" id="8BJQ">
    <property type="method" value="EM"/>
    <property type="resolution" value="3.80 A"/>
    <property type="chains" value="Lp=2-92"/>
</dbReference>
<dbReference type="PDB" id="8BN3">
    <property type="method" value="EM"/>
    <property type="resolution" value="2.40 A"/>
    <property type="chains" value="Q3=2-92"/>
</dbReference>
<dbReference type="PDB" id="8BQD">
    <property type="method" value="EM"/>
    <property type="resolution" value="3.90 A"/>
    <property type="chains" value="AT=2-92"/>
</dbReference>
<dbReference type="PDB" id="8BQX">
    <property type="method" value="EM"/>
    <property type="resolution" value="3.80 A"/>
    <property type="chains" value="AT=2-92"/>
</dbReference>
<dbReference type="PDB" id="8CCS">
    <property type="method" value="EM"/>
    <property type="resolution" value="1.97 A"/>
    <property type="chains" value="b=1-92"/>
</dbReference>
<dbReference type="PDB" id="8CDL">
    <property type="method" value="EM"/>
    <property type="resolution" value="2.72 A"/>
    <property type="chains" value="b=1-92"/>
</dbReference>
<dbReference type="PDB" id="8CDR">
    <property type="method" value="EM"/>
    <property type="resolution" value="2.04 A"/>
    <property type="chains" value="b=1-92"/>
</dbReference>
<dbReference type="PDB" id="8CEH">
    <property type="method" value="EM"/>
    <property type="resolution" value="2.05 A"/>
    <property type="chains" value="b=1-92"/>
</dbReference>
<dbReference type="PDB" id="8CF5">
    <property type="method" value="EM"/>
    <property type="resolution" value="2.71 A"/>
    <property type="chains" value="b=1-92"/>
</dbReference>
<dbReference type="PDB" id="8CG8">
    <property type="method" value="EM"/>
    <property type="resolution" value="2.57 A"/>
    <property type="chains" value="b=1-92"/>
</dbReference>
<dbReference type="PDB" id="8CGN">
    <property type="method" value="EM"/>
    <property type="resolution" value="2.28 A"/>
    <property type="chains" value="b=1-92"/>
</dbReference>
<dbReference type="PDB" id="8CIV">
    <property type="method" value="EM"/>
    <property type="resolution" value="2.47 A"/>
    <property type="chains" value="b=1-92"/>
</dbReference>
<dbReference type="PDB" id="8CKU">
    <property type="method" value="EM"/>
    <property type="resolution" value="3.11 A"/>
    <property type="chains" value="b=1-92"/>
</dbReference>
<dbReference type="PDB" id="8CMJ">
    <property type="method" value="EM"/>
    <property type="resolution" value="3.79 A"/>
    <property type="chains" value="b=1-92"/>
</dbReference>
<dbReference type="PDB" id="8EUB">
    <property type="method" value="EM"/>
    <property type="resolution" value="2.52 A"/>
    <property type="chains" value="Ap=1-92"/>
</dbReference>
<dbReference type="PDB" id="8EVP">
    <property type="method" value="EM"/>
    <property type="resolution" value="2.38 A"/>
    <property type="chains" value="Ap=1-92"/>
</dbReference>
<dbReference type="PDB" id="8EVQ">
    <property type="method" value="EM"/>
    <property type="resolution" value="2.72 A"/>
    <property type="chains" value="Ap=1-92"/>
</dbReference>
<dbReference type="PDB" id="8EVR">
    <property type="method" value="EM"/>
    <property type="resolution" value="2.87 A"/>
    <property type="chains" value="Ap=1-92"/>
</dbReference>
<dbReference type="PDB" id="8EVS">
    <property type="method" value="EM"/>
    <property type="resolution" value="2.62 A"/>
    <property type="chains" value="Ap=1-92"/>
</dbReference>
<dbReference type="PDB" id="8EVT">
    <property type="method" value="EM"/>
    <property type="resolution" value="2.20 A"/>
    <property type="chains" value="Ap=1-92"/>
</dbReference>
<dbReference type="PDB" id="8EWB">
    <property type="method" value="EM"/>
    <property type="resolution" value="2.87 A"/>
    <property type="chains" value="Ap=1-92"/>
</dbReference>
<dbReference type="PDB" id="8EWC">
    <property type="method" value="EM"/>
    <property type="resolution" value="2.45 A"/>
    <property type="chains" value="Ap=1-92"/>
</dbReference>
<dbReference type="PDB" id="8HFR">
    <property type="method" value="EM"/>
    <property type="resolution" value="2.64 A"/>
    <property type="chains" value="nY=1-92"/>
</dbReference>
<dbReference type="PDB" id="8K2D">
    <property type="method" value="EM"/>
    <property type="resolution" value="3.20 A"/>
    <property type="chains" value="Lp=1-92"/>
</dbReference>
<dbReference type="PDB" id="8K82">
    <property type="method" value="EM"/>
    <property type="resolution" value="3.00 A"/>
    <property type="chains" value="Lp=1-92"/>
</dbReference>
<dbReference type="PDB" id="8P4V">
    <property type="method" value="X-ray"/>
    <property type="resolution" value="3.16 A"/>
    <property type="chains" value="AQ/DR=1-92"/>
</dbReference>
<dbReference type="PDB" id="8P8M">
    <property type="method" value="EM"/>
    <property type="resolution" value="2.66 A"/>
    <property type="chains" value="RT=1-92"/>
</dbReference>
<dbReference type="PDB" id="8P8N">
    <property type="method" value="EM"/>
    <property type="resolution" value="2.15 A"/>
    <property type="chains" value="RT=1-92"/>
</dbReference>
<dbReference type="PDB" id="8P8U">
    <property type="method" value="EM"/>
    <property type="resolution" value="2.23 A"/>
    <property type="chains" value="RT=1-92"/>
</dbReference>
<dbReference type="PDB" id="8P9A">
    <property type="method" value="X-ray"/>
    <property type="resolution" value="2.90 A"/>
    <property type="chains" value="AQ/DR=1-92"/>
</dbReference>
<dbReference type="PDB" id="8PFR">
    <property type="method" value="EM"/>
    <property type="resolution" value="2.15 A"/>
    <property type="chains" value="RT=1-92"/>
</dbReference>
<dbReference type="PDB" id="8T2X">
    <property type="method" value="EM"/>
    <property type="resolution" value="2.46 A"/>
    <property type="chains" value="Ap=1-92"/>
</dbReference>
<dbReference type="PDB" id="8T2Y">
    <property type="method" value="EM"/>
    <property type="resolution" value="2.20 A"/>
    <property type="chains" value="Ap=1-92"/>
</dbReference>
<dbReference type="PDB" id="8T2Z">
    <property type="method" value="EM"/>
    <property type="resolution" value="2.40 A"/>
    <property type="chains" value="Ap=1-92"/>
</dbReference>
<dbReference type="PDB" id="8T30">
    <property type="method" value="EM"/>
    <property type="resolution" value="2.88 A"/>
    <property type="chains" value="Ap=1-92"/>
</dbReference>
<dbReference type="PDB" id="8T3A">
    <property type="method" value="EM"/>
    <property type="resolution" value="2.86 A"/>
    <property type="chains" value="Ap=1-92"/>
</dbReference>
<dbReference type="PDB" id="8T3B">
    <property type="method" value="EM"/>
    <property type="resolution" value="3.08 A"/>
    <property type="chains" value="Ap=1-92"/>
</dbReference>
<dbReference type="PDB" id="8T3C">
    <property type="method" value="EM"/>
    <property type="resolution" value="3.86 A"/>
    <property type="chains" value="Ap=1-92"/>
</dbReference>
<dbReference type="PDB" id="8T3D">
    <property type="method" value="EM"/>
    <property type="resolution" value="2.95 A"/>
    <property type="chains" value="Ap=1-92"/>
</dbReference>
<dbReference type="PDB" id="8T3E">
    <property type="method" value="EM"/>
    <property type="resolution" value="3.04 A"/>
    <property type="chains" value="Ap=1-92"/>
</dbReference>
<dbReference type="PDB" id="8T3F">
    <property type="method" value="EM"/>
    <property type="resolution" value="3.09 A"/>
    <property type="chains" value="Ap=1-92"/>
</dbReference>
<dbReference type="PDB" id="8UT0">
    <property type="method" value="EM"/>
    <property type="resolution" value="3.22 A"/>
    <property type="chains" value="Lr=2-92"/>
</dbReference>
<dbReference type="PDB" id="8UTI">
    <property type="method" value="EM"/>
    <property type="resolution" value="3.13 A"/>
    <property type="chains" value="Lr=2-92"/>
</dbReference>
<dbReference type="PDB" id="8XU8">
    <property type="method" value="EM"/>
    <property type="resolution" value="3.40 A"/>
    <property type="chains" value="r=2-92"/>
</dbReference>
<dbReference type="PDB" id="8Y0U">
    <property type="method" value="EM"/>
    <property type="resolution" value="3.59 A"/>
    <property type="chains" value="Lp=1-92"/>
</dbReference>
<dbReference type="PDB" id="8YLD">
    <property type="method" value="EM"/>
    <property type="resolution" value="3.90 A"/>
    <property type="chains" value="r=2-92"/>
</dbReference>
<dbReference type="PDB" id="8YLR">
    <property type="method" value="EM"/>
    <property type="resolution" value="3.90 A"/>
    <property type="chains" value="r=2-92"/>
</dbReference>
<dbReference type="PDB" id="8Z70">
    <property type="method" value="EM"/>
    <property type="resolution" value="3.20 A"/>
    <property type="chains" value="r=2-92"/>
</dbReference>
<dbReference type="PDB" id="8Z71">
    <property type="method" value="EM"/>
    <property type="resolution" value="3.60 A"/>
    <property type="chains" value="r=2-92"/>
</dbReference>
<dbReference type="PDB" id="9F9S">
    <property type="method" value="EM"/>
    <property type="resolution" value="2.90 A"/>
    <property type="chains" value="Lb/Mb=1-92"/>
</dbReference>
<dbReference type="PDBsum" id="3J6X"/>
<dbReference type="PDBsum" id="3J6Y"/>
<dbReference type="PDBsum" id="3J77"/>
<dbReference type="PDBsum" id="3J78"/>
<dbReference type="PDBsum" id="3JCT"/>
<dbReference type="PDBsum" id="4U3M"/>
<dbReference type="PDBsum" id="4U3N"/>
<dbReference type="PDBsum" id="4U3U"/>
<dbReference type="PDBsum" id="4U4N"/>
<dbReference type="PDBsum" id="4U4O"/>
<dbReference type="PDBsum" id="4U4Q"/>
<dbReference type="PDBsum" id="4U4R"/>
<dbReference type="PDBsum" id="4U4U"/>
<dbReference type="PDBsum" id="4U4Y"/>
<dbReference type="PDBsum" id="4U4Z"/>
<dbReference type="PDBsum" id="4U50"/>
<dbReference type="PDBsum" id="4U51"/>
<dbReference type="PDBsum" id="4U52"/>
<dbReference type="PDBsum" id="4U53"/>
<dbReference type="PDBsum" id="4U55"/>
<dbReference type="PDBsum" id="4U56"/>
<dbReference type="PDBsum" id="4U6F"/>
<dbReference type="PDBsum" id="4V4B"/>
<dbReference type="PDBsum" id="4V5Z"/>
<dbReference type="PDBsum" id="4V6I"/>
<dbReference type="PDBsum" id="4V7F"/>
<dbReference type="PDBsum" id="4V7R"/>
<dbReference type="PDBsum" id="4V88"/>
<dbReference type="PDBsum" id="4V8T"/>
<dbReference type="PDBsum" id="4V91"/>
<dbReference type="PDBsum" id="5APN"/>
<dbReference type="PDBsum" id="5APO"/>
<dbReference type="PDBsum" id="5DAT"/>
<dbReference type="PDBsum" id="5DC3"/>
<dbReference type="PDBsum" id="5DGE"/>
<dbReference type="PDBsum" id="5DGF"/>
<dbReference type="PDBsum" id="5DGV"/>
<dbReference type="PDBsum" id="5FCI"/>
<dbReference type="PDBsum" id="5FCJ"/>
<dbReference type="PDBsum" id="5GAK"/>
<dbReference type="PDBsum" id="5H4P"/>
<dbReference type="PDBsum" id="5I4L"/>
<dbReference type="PDBsum" id="5JCS"/>
<dbReference type="PDBsum" id="5JUO"/>
<dbReference type="PDBsum" id="5JUP"/>
<dbReference type="PDBsum" id="5JUS"/>
<dbReference type="PDBsum" id="5JUT"/>
<dbReference type="PDBsum" id="5JUU"/>
<dbReference type="PDBsum" id="5LYB"/>
<dbReference type="PDBsum" id="5MC6"/>
<dbReference type="PDBsum" id="5MEI"/>
<dbReference type="PDBsum" id="5NDG"/>
<dbReference type="PDBsum" id="5NDV"/>
<dbReference type="PDBsum" id="5NDW"/>
<dbReference type="PDBsum" id="5OBM"/>
<dbReference type="PDBsum" id="5ON6"/>
<dbReference type="PDBsum" id="5T62"/>
<dbReference type="PDBsum" id="5T6R"/>
<dbReference type="PDBsum" id="5TBW"/>
<dbReference type="PDBsum" id="5TGA"/>
<dbReference type="PDBsum" id="5TGM"/>
<dbReference type="PDBsum" id="6FT6"/>
<dbReference type="PDBsum" id="6GQ1"/>
<dbReference type="PDBsum" id="6GQB"/>
<dbReference type="PDBsum" id="6GQV"/>
<dbReference type="PDBsum" id="6HD7"/>
<dbReference type="PDBsum" id="6HHQ"/>
<dbReference type="PDBsum" id="6I7O"/>
<dbReference type="PDBsum" id="6M62"/>
<dbReference type="PDBsum" id="6N8J"/>
<dbReference type="PDBsum" id="6N8K"/>
<dbReference type="PDBsum" id="6N8L"/>
<dbReference type="PDBsum" id="6N8M"/>
<dbReference type="PDBsum" id="6N8N"/>
<dbReference type="PDBsum" id="6N8O"/>
<dbReference type="PDBsum" id="6OIG"/>
<dbReference type="PDBsum" id="6Q8Y"/>
<dbReference type="PDBsum" id="6QIK"/>
<dbReference type="PDBsum" id="6QT0"/>
<dbReference type="PDBsum" id="6QTZ"/>
<dbReference type="PDBsum" id="6R84"/>
<dbReference type="PDBsum" id="6R86"/>
<dbReference type="PDBsum" id="6R87"/>
<dbReference type="PDBsum" id="6RI5"/>
<dbReference type="PDBsum" id="6RZZ"/>
<dbReference type="PDBsum" id="6S05"/>
<dbReference type="PDBsum" id="6S47"/>
<dbReference type="PDBsum" id="6SNT"/>
<dbReference type="PDBsum" id="6SV4"/>
<dbReference type="PDBsum" id="6T4Q"/>
<dbReference type="PDBsum" id="6T7I"/>
<dbReference type="PDBsum" id="6T7T"/>
<dbReference type="PDBsum" id="6T83"/>
<dbReference type="PDBsum" id="6TB3"/>
<dbReference type="PDBsum" id="6TNU"/>
<dbReference type="PDBsum" id="6WOO"/>
<dbReference type="PDBsum" id="6XIQ"/>
<dbReference type="PDBsum" id="6XIR"/>
<dbReference type="PDBsum" id="6YLG"/>
<dbReference type="PDBsum" id="6YLH"/>
<dbReference type="PDBsum" id="6YLY"/>
<dbReference type="PDBsum" id="6Z6J"/>
<dbReference type="PDBsum" id="6Z6K"/>
<dbReference type="PDBsum" id="7AZY"/>
<dbReference type="PDBsum" id="7B7D"/>
<dbReference type="PDBsum" id="7BT6"/>
<dbReference type="PDBsum" id="7BTB"/>
<dbReference type="PDBsum" id="7MPI"/>
<dbReference type="PDBsum" id="7MPJ"/>
<dbReference type="PDBsum" id="7N8B"/>
<dbReference type="PDBsum" id="7NRC"/>
<dbReference type="PDBsum" id="7NRD"/>
<dbReference type="PDBsum" id="7OF1"/>
<dbReference type="PDBsum" id="7OH3"/>
<dbReference type="PDBsum" id="7OHQ"/>
<dbReference type="PDBsum" id="7OSA"/>
<dbReference type="PDBsum" id="7OSM"/>
<dbReference type="PDBsum" id="7RR5"/>
<dbReference type="PDBsum" id="7TOO"/>
<dbReference type="PDBsum" id="7TOP"/>
<dbReference type="PDBsum" id="7U0H"/>
<dbReference type="PDBsum" id="7UG6"/>
<dbReference type="PDBsum" id="7UOO"/>
<dbReference type="PDBsum" id="7UQB"/>
<dbReference type="PDBsum" id="7UQZ"/>
<dbReference type="PDBsum" id="7V08"/>
<dbReference type="PDBsum" id="7Z34"/>
<dbReference type="PDBsum" id="7ZPQ"/>
<dbReference type="PDBsum" id="7ZRS"/>
<dbReference type="PDBsum" id="7ZS5"/>
<dbReference type="PDBsum" id="7ZUW"/>
<dbReference type="PDBsum" id="7ZUX"/>
<dbReference type="PDBsum" id="7ZW0"/>
<dbReference type="PDBsum" id="8AAF"/>
<dbReference type="PDBsum" id="8AGT"/>
<dbReference type="PDBsum" id="8AGU"/>
<dbReference type="PDBsum" id="8AGV"/>
<dbReference type="PDBsum" id="8AGW"/>
<dbReference type="PDBsum" id="8AGX"/>
<dbReference type="PDBsum" id="8AGZ"/>
<dbReference type="PDBsum" id="8BIP"/>
<dbReference type="PDBsum" id="8BJQ"/>
<dbReference type="PDBsum" id="8BN3"/>
<dbReference type="PDBsum" id="8BQD"/>
<dbReference type="PDBsum" id="8BQX"/>
<dbReference type="PDBsum" id="8CCS"/>
<dbReference type="PDBsum" id="8CDL"/>
<dbReference type="PDBsum" id="8CDR"/>
<dbReference type="PDBsum" id="8CEH"/>
<dbReference type="PDBsum" id="8CF5"/>
<dbReference type="PDBsum" id="8CG8"/>
<dbReference type="PDBsum" id="8CGN"/>
<dbReference type="PDBsum" id="8CIV"/>
<dbReference type="PDBsum" id="8CKU"/>
<dbReference type="PDBsum" id="8CMJ"/>
<dbReference type="PDBsum" id="8EUB"/>
<dbReference type="PDBsum" id="8EVP"/>
<dbReference type="PDBsum" id="8EVQ"/>
<dbReference type="PDBsum" id="8EVR"/>
<dbReference type="PDBsum" id="8EVS"/>
<dbReference type="PDBsum" id="8EVT"/>
<dbReference type="PDBsum" id="8EWB"/>
<dbReference type="PDBsum" id="8EWC"/>
<dbReference type="PDBsum" id="8HFR"/>
<dbReference type="PDBsum" id="8K2D"/>
<dbReference type="PDBsum" id="8K82"/>
<dbReference type="PDBsum" id="8P4V"/>
<dbReference type="PDBsum" id="8P8M"/>
<dbReference type="PDBsum" id="8P8N"/>
<dbReference type="PDBsum" id="8P8U"/>
<dbReference type="PDBsum" id="8P9A"/>
<dbReference type="PDBsum" id="8PFR"/>
<dbReference type="PDBsum" id="8T2X"/>
<dbReference type="PDBsum" id="8T2Y"/>
<dbReference type="PDBsum" id="8T2Z"/>
<dbReference type="PDBsum" id="8T30"/>
<dbReference type="PDBsum" id="8T3A"/>
<dbReference type="PDBsum" id="8T3B"/>
<dbReference type="PDBsum" id="8T3C"/>
<dbReference type="PDBsum" id="8T3D"/>
<dbReference type="PDBsum" id="8T3E"/>
<dbReference type="PDBsum" id="8T3F"/>
<dbReference type="PDBsum" id="8UT0"/>
<dbReference type="PDBsum" id="8UTI"/>
<dbReference type="PDBsum" id="8XU8"/>
<dbReference type="PDBsum" id="8Y0U"/>
<dbReference type="PDBsum" id="8YLD"/>
<dbReference type="PDBsum" id="8YLR"/>
<dbReference type="PDBsum" id="8Z70"/>
<dbReference type="PDBsum" id="8Z71"/>
<dbReference type="PDBsum" id="9F9S"/>
<dbReference type="EMDB" id="EMD-0047"/>
<dbReference type="EMDB" id="EMD-0048"/>
<dbReference type="EMDB" id="EMD-0049"/>
<dbReference type="EMDB" id="EMD-0202"/>
<dbReference type="EMDB" id="EMD-0369"/>
<dbReference type="EMDB" id="EMD-0370"/>
<dbReference type="EMDB" id="EMD-0371"/>
<dbReference type="EMDB" id="EMD-0372"/>
<dbReference type="EMDB" id="EMD-0373"/>
<dbReference type="EMDB" id="EMD-0374"/>
<dbReference type="EMDB" id="EMD-10068"/>
<dbReference type="EMDB" id="EMD-10071"/>
<dbReference type="EMDB" id="EMD-10098"/>
<dbReference type="EMDB" id="EMD-10262"/>
<dbReference type="EMDB" id="EMD-10315"/>
<dbReference type="EMDB" id="EMD-10377"/>
<dbReference type="EMDB" id="EMD-10396"/>
<dbReference type="EMDB" id="EMD-10397"/>
<dbReference type="EMDB" id="EMD-10398"/>
<dbReference type="EMDB" id="EMD-10431"/>
<dbReference type="EMDB" id="EMD-10537"/>
<dbReference type="EMDB" id="EMD-10838"/>
<dbReference type="EMDB" id="EMD-10839"/>
<dbReference type="EMDB" id="EMD-10842"/>
<dbReference type="EMDB" id="EMD-11096"/>
<dbReference type="EMDB" id="EMD-11097"/>
<dbReference type="EMDB" id="EMD-11951"/>
<dbReference type="EMDB" id="EMD-12081"/>
<dbReference type="EMDB" id="EMD-12534"/>
<dbReference type="EMDB" id="EMD-12535"/>
<dbReference type="EMDB" id="EMD-12866"/>
<dbReference type="EMDB" id="EMD-12892"/>
<dbReference type="EMDB" id="EMD-12905"/>
<dbReference type="EMDB" id="EMD-14471"/>
<dbReference type="EMDB" id="EMD-14861"/>
<dbReference type="EMDB" id="EMD-14921"/>
<dbReference type="EMDB" id="EMD-14926"/>
<dbReference type="EMDB" id="EMD-14978"/>
<dbReference type="EMDB" id="EMD-14979"/>
<dbReference type="EMDB" id="EMD-14990"/>
<dbReference type="EMDB" id="EMD-15296"/>
<dbReference type="EMDB" id="EMD-15423"/>
<dbReference type="EMDB" id="EMD-15424"/>
<dbReference type="EMDB" id="EMD-15425"/>
<dbReference type="EMDB" id="EMD-15426"/>
<dbReference type="EMDB" id="EMD-15427"/>
<dbReference type="EMDB" id="EMD-15428"/>
<dbReference type="EMDB" id="EMD-16086"/>
<dbReference type="EMDB" id="EMD-16090"/>
<dbReference type="EMDB" id="EMD-16127"/>
<dbReference type="EMDB" id="EMD-16182"/>
<dbReference type="EMDB" id="EMD-16191"/>
<dbReference type="EMDB" id="EMD-16563"/>
<dbReference type="EMDB" id="EMD-16591"/>
<dbReference type="EMDB" id="EMD-16594"/>
<dbReference type="EMDB" id="EMD-16609"/>
<dbReference type="EMDB" id="EMD-16616"/>
<dbReference type="EMDB" id="EMD-16634"/>
<dbReference type="EMDB" id="EMD-16648"/>
<dbReference type="EMDB" id="EMD-16684"/>
<dbReference type="EMDB" id="EMD-16702"/>
<dbReference type="EMDB" id="EMD-16729"/>
<dbReference type="EMDB" id="EMD-17549"/>
<dbReference type="EMDB" id="EMD-17550"/>
<dbReference type="EMDB" id="EMD-17552"/>
<dbReference type="EMDB" id="EMD-17653"/>
<dbReference type="EMDB" id="EMD-20077"/>
<dbReference type="EMDB" id="EMD-21859"/>
<dbReference type="EMDB" id="EMD-22196"/>
<dbReference type="EMDB" id="EMD-22198"/>
<dbReference type="EMDB" id="EMD-23934"/>
<dbReference type="EMDB" id="EMD-23935"/>
<dbReference type="EMDB" id="EMD-24235"/>
<dbReference type="EMDB" id="EMD-24652"/>
<dbReference type="EMDB" id="EMD-26033"/>
<dbReference type="EMDB" id="EMD-26034"/>
<dbReference type="EMDB" id="EMD-26259"/>
<dbReference type="EMDB" id="EMD-26485"/>
<dbReference type="EMDB" id="EMD-26651"/>
<dbReference type="EMDB" id="EMD-26686"/>
<dbReference type="EMDB" id="EMD-26703"/>
<dbReference type="EMDB" id="EMD-26941"/>
<dbReference type="EMDB" id="EMD-28610"/>
<dbReference type="EMDB" id="EMD-28632"/>
<dbReference type="EMDB" id="EMD-28633"/>
<dbReference type="EMDB" id="EMD-28634"/>
<dbReference type="EMDB" id="EMD-28635"/>
<dbReference type="EMDB" id="EMD-28636"/>
<dbReference type="EMDB" id="EMD-28642"/>
<dbReference type="EMDB" id="EMD-28643"/>
<dbReference type="EMDB" id="EMD-30108"/>
<dbReference type="EMDB" id="EMD-30170"/>
<dbReference type="EMDB" id="EMD-30174"/>
<dbReference type="EMDB" id="EMD-3461"/>
<dbReference type="EMDB" id="EMD-34725"/>
<dbReference type="EMDB" id="EMD-36839"/>
<dbReference type="EMDB" id="EMD-36945"/>
<dbReference type="EMDB" id="EMD-38660"/>
<dbReference type="EMDB" id="EMD-40990"/>
<dbReference type="EMDB" id="EMD-40991"/>
<dbReference type="EMDB" id="EMD-40992"/>
<dbReference type="EMDB" id="EMD-40993"/>
<dbReference type="EMDB" id="EMD-40997"/>
<dbReference type="EMDB" id="EMD-40998"/>
<dbReference type="EMDB" id="EMD-40999"/>
<dbReference type="EMDB" id="EMD-41000"/>
<dbReference type="EMDB" id="EMD-41001"/>
<dbReference type="EMDB" id="EMD-41002"/>
<dbReference type="EMDB" id="EMD-42525"/>
<dbReference type="EMDB" id="EMD-42540"/>
<dbReference type="EMDB" id="EMD-4302"/>
<dbReference type="EMDB" id="EMD-4427"/>
<dbReference type="EMDB" id="EMD-4474"/>
<dbReference type="EMDB" id="EMD-4560"/>
<dbReference type="EMDB" id="EMD-4630"/>
<dbReference type="EMDB" id="EMD-4636"/>
<dbReference type="EMDB" id="EMD-4751"/>
<dbReference type="EMDB" id="EMD-4752"/>
<dbReference type="EMDB" id="EMD-4753"/>
<dbReference type="EMDB" id="EMD-4884"/>
<dbReference type="EMDB" id="EMD-50259"/>
<dbReference type="EMDB" id="EMD-8362"/>
<dbReference type="EMDB" id="EMD-8368"/>
<dbReference type="SMR" id="P0CX25"/>
<dbReference type="BioGRID" id="33849">
    <property type="interactions" value="220"/>
</dbReference>
<dbReference type="BioGRID" id="36220">
    <property type="interactions" value="469"/>
</dbReference>
<dbReference type="ComplexPortal" id="CPX-1601">
    <property type="entry name" value="60S cytosolic large ribosomal subunit"/>
</dbReference>
<dbReference type="FunCoup" id="P0CX25">
    <property type="interactions" value="1286"/>
</dbReference>
<dbReference type="IntAct" id="P0CX25">
    <property type="interactions" value="61"/>
</dbReference>
<dbReference type="MINT" id="P0CX25"/>
<dbReference type="STRING" id="4932.YJR094W-A"/>
<dbReference type="iPTMnet" id="P0CX25"/>
<dbReference type="PaxDb" id="4932-YJR094W-A"/>
<dbReference type="PeptideAtlas" id="P0CX25"/>
<dbReference type="EnsemblFungi" id="YJR094W-A_mRNA">
    <property type="protein sequence ID" value="YJR094W-A"/>
    <property type="gene ID" value="YJR094W-A"/>
</dbReference>
<dbReference type="EnsemblFungi" id="YPR043W_mRNA">
    <property type="protein sequence ID" value="YPR043W"/>
    <property type="gene ID" value="YPR043W"/>
</dbReference>
<dbReference type="GeneID" id="856156"/>
<dbReference type="KEGG" id="sce:YJR094W-A"/>
<dbReference type="KEGG" id="sce:YPR043W"/>
<dbReference type="AGR" id="SGD:S000006247"/>
<dbReference type="SGD" id="S000006247">
    <property type="gene designation" value="RPL43A"/>
</dbReference>
<dbReference type="VEuPathDB" id="FungiDB:YJR094W-A"/>
<dbReference type="VEuPathDB" id="FungiDB:YPR043W"/>
<dbReference type="eggNOG" id="KOG0402">
    <property type="taxonomic scope" value="Eukaryota"/>
</dbReference>
<dbReference type="HOGENOM" id="CLU_141199_1_0_1"/>
<dbReference type="InParanoid" id="P0CX25"/>
<dbReference type="OMA" id="GPRYGRK"/>
<dbReference type="OrthoDB" id="10258345at2759"/>
<dbReference type="BioCyc" id="YEAST:G3O-34199-MONOMER"/>
<dbReference type="BioGRID-ORCS" id="853557">
    <property type="hits" value="8 hits in 10 CRISPR screens"/>
</dbReference>
<dbReference type="BioGRID-ORCS" id="856156">
    <property type="hits" value="0 hits in 10 CRISPR screens"/>
</dbReference>
<dbReference type="PRO" id="PR:P0CX25"/>
<dbReference type="Proteomes" id="UP000002311">
    <property type="component" value="Chromosome XVI"/>
</dbReference>
<dbReference type="RNAct" id="P0CX25">
    <property type="molecule type" value="protein"/>
</dbReference>
<dbReference type="ExpressionAtlas" id="P0CX25">
    <property type="expression patterns" value="baseline and differential"/>
</dbReference>
<dbReference type="GO" id="GO:0005829">
    <property type="term" value="C:cytosol"/>
    <property type="evidence" value="ECO:0000304"/>
    <property type="project" value="Reactome"/>
</dbReference>
<dbReference type="GO" id="GO:0022625">
    <property type="term" value="C:cytosolic large ribosomal subunit"/>
    <property type="evidence" value="ECO:0000314"/>
    <property type="project" value="SGD"/>
</dbReference>
<dbReference type="GO" id="GO:0003735">
    <property type="term" value="F:structural constituent of ribosome"/>
    <property type="evidence" value="ECO:0000305"/>
    <property type="project" value="SGD"/>
</dbReference>
<dbReference type="GO" id="GO:0008270">
    <property type="term" value="F:zinc ion binding"/>
    <property type="evidence" value="ECO:0007669"/>
    <property type="project" value="UniProtKB-KW"/>
</dbReference>
<dbReference type="GO" id="GO:0002181">
    <property type="term" value="P:cytoplasmic translation"/>
    <property type="evidence" value="ECO:0000305"/>
    <property type="project" value="SGD"/>
</dbReference>
<dbReference type="FunFam" id="2.20.25.30:FF:000002">
    <property type="entry name" value="60S ribosomal protein L37a"/>
    <property type="match status" value="1"/>
</dbReference>
<dbReference type="Gene3D" id="2.20.25.30">
    <property type="match status" value="1"/>
</dbReference>
<dbReference type="HAMAP" id="MF_00327">
    <property type="entry name" value="Ribosomal_eL43"/>
    <property type="match status" value="1"/>
</dbReference>
<dbReference type="InterPro" id="IPR011331">
    <property type="entry name" value="Ribosomal_eL37/eL43"/>
</dbReference>
<dbReference type="InterPro" id="IPR002674">
    <property type="entry name" value="Ribosomal_eL43"/>
</dbReference>
<dbReference type="InterPro" id="IPR050522">
    <property type="entry name" value="Ribosomal_protein_eL43"/>
</dbReference>
<dbReference type="InterPro" id="IPR011332">
    <property type="entry name" value="Ribosomal_zn-bd"/>
</dbReference>
<dbReference type="NCBIfam" id="TIGR00280">
    <property type="entry name" value="eL43_euk_arch"/>
    <property type="match status" value="1"/>
</dbReference>
<dbReference type="NCBIfam" id="NF003058">
    <property type="entry name" value="PRK03976.1"/>
    <property type="match status" value="1"/>
</dbReference>
<dbReference type="PANTHER" id="PTHR48129">
    <property type="entry name" value="60S RIBOSOMAL PROTEIN L37A"/>
    <property type="match status" value="1"/>
</dbReference>
<dbReference type="PANTHER" id="PTHR48129:SF1">
    <property type="entry name" value="LARGE RIBOSOMAL SUBUNIT PROTEIN EL43"/>
    <property type="match status" value="1"/>
</dbReference>
<dbReference type="Pfam" id="PF01780">
    <property type="entry name" value="Ribosomal_L37ae"/>
    <property type="match status" value="1"/>
</dbReference>
<dbReference type="SUPFAM" id="SSF57829">
    <property type="entry name" value="Zn-binding ribosomal proteins"/>
    <property type="match status" value="1"/>
</dbReference>
<keyword id="KW-0002">3D-structure</keyword>
<keyword id="KW-0963">Cytoplasm</keyword>
<keyword id="KW-0479">Metal-binding</keyword>
<keyword id="KW-0597">Phosphoprotein</keyword>
<keyword id="KW-1185">Reference proteome</keyword>
<keyword id="KW-0687">Ribonucleoprotein</keyword>
<keyword id="KW-0689">Ribosomal protein</keyword>
<keyword id="KW-0862">Zinc</keyword>
<keyword id="KW-0863">Zinc-finger</keyword>
<sequence>MAKRTKKVGITGKYGVRYGSSLRRQVKKLEIQQHARYDCSFCGKKTVKRGAAGIWTCSCCKKTVAGGAYTVSTAAAATVRSTIRRLREMVEA</sequence>
<gene>
    <name evidence="6" type="primary">RPL43A</name>
    <name type="ordered locus">YPR043W</name>
    <name type="ORF">YP9499.02</name>
</gene>
<reference key="1">
    <citation type="journal article" date="1998" name="Yeast">
        <title>Functional analysis of three adjacent open reading frames from the right arm of yeast chromosome XVI.</title>
        <authorList>
            <person name="Waskiewicz-Staniorowska B."/>
            <person name="Skala J."/>
            <person name="Jasinski M."/>
            <person name="Grenson M."/>
            <person name="Goffeau A."/>
            <person name="Ulaszewski S."/>
        </authorList>
    </citation>
    <scope>NUCLEOTIDE SEQUENCE [GENOMIC DNA]</scope>
    <source>
        <strain>ATCC 46191 / IL125-2B</strain>
    </source>
</reference>
<reference key="2">
    <citation type="journal article" date="1997" name="Nature">
        <title>The nucleotide sequence of Saccharomyces cerevisiae chromosome XVI.</title>
        <authorList>
            <person name="Bussey H."/>
            <person name="Storms R.K."/>
            <person name="Ahmed A."/>
            <person name="Albermann K."/>
            <person name="Allen E."/>
            <person name="Ansorge W."/>
            <person name="Araujo R."/>
            <person name="Aparicio A."/>
            <person name="Barrell B.G."/>
            <person name="Badcock K."/>
            <person name="Benes V."/>
            <person name="Botstein D."/>
            <person name="Bowman S."/>
            <person name="Brueckner M."/>
            <person name="Carpenter J."/>
            <person name="Cherry J.M."/>
            <person name="Chung E."/>
            <person name="Churcher C.M."/>
            <person name="Coster F."/>
            <person name="Davis K."/>
            <person name="Davis R.W."/>
            <person name="Dietrich F.S."/>
            <person name="Delius H."/>
            <person name="DiPaolo T."/>
            <person name="Dubois E."/>
            <person name="Duesterhoeft A."/>
            <person name="Duncan M."/>
            <person name="Floeth M."/>
            <person name="Fortin N."/>
            <person name="Friesen J.D."/>
            <person name="Fritz C."/>
            <person name="Goffeau A."/>
            <person name="Hall J."/>
            <person name="Hebling U."/>
            <person name="Heumann K."/>
            <person name="Hilbert H."/>
            <person name="Hillier L.W."/>
            <person name="Hunicke-Smith S."/>
            <person name="Hyman R.W."/>
            <person name="Johnston M."/>
            <person name="Kalman S."/>
            <person name="Kleine K."/>
            <person name="Komp C."/>
            <person name="Kurdi O."/>
            <person name="Lashkari D."/>
            <person name="Lew H."/>
            <person name="Lin A."/>
            <person name="Lin D."/>
            <person name="Louis E.J."/>
            <person name="Marathe R."/>
            <person name="Messenguy F."/>
            <person name="Mewes H.-W."/>
            <person name="Mirtipati S."/>
            <person name="Moestl D."/>
            <person name="Mueller-Auer S."/>
            <person name="Namath A."/>
            <person name="Nentwich U."/>
            <person name="Oefner P."/>
            <person name="Pearson D."/>
            <person name="Petel F.X."/>
            <person name="Pohl T.M."/>
            <person name="Purnelle B."/>
            <person name="Rajandream M.A."/>
            <person name="Rechmann S."/>
            <person name="Rieger M."/>
            <person name="Riles L."/>
            <person name="Roberts D."/>
            <person name="Schaefer M."/>
            <person name="Scharfe M."/>
            <person name="Scherens B."/>
            <person name="Schramm S."/>
            <person name="Schroeder M."/>
            <person name="Sdicu A.-M."/>
            <person name="Tettelin H."/>
            <person name="Urrestarazu L.A."/>
            <person name="Ushinsky S."/>
            <person name="Vierendeels F."/>
            <person name="Vissers S."/>
            <person name="Voss H."/>
            <person name="Walsh S.V."/>
            <person name="Wambutt R."/>
            <person name="Wang Y."/>
            <person name="Wedler E."/>
            <person name="Wedler H."/>
            <person name="Winnett E."/>
            <person name="Zhong W.-W."/>
            <person name="Zollner A."/>
            <person name="Vo D.H."/>
            <person name="Hani J."/>
        </authorList>
    </citation>
    <scope>NUCLEOTIDE SEQUENCE [LARGE SCALE GENOMIC DNA]</scope>
    <source>
        <strain>ATCC 204508 / S288c</strain>
    </source>
</reference>
<reference key="3">
    <citation type="journal article" date="2014" name="G3 (Bethesda)">
        <title>The reference genome sequence of Saccharomyces cerevisiae: Then and now.</title>
        <authorList>
            <person name="Engel S.R."/>
            <person name="Dietrich F.S."/>
            <person name="Fisk D.G."/>
            <person name="Binkley G."/>
            <person name="Balakrishnan R."/>
            <person name="Costanzo M.C."/>
            <person name="Dwight S.S."/>
            <person name="Hitz B.C."/>
            <person name="Karra K."/>
            <person name="Nash R.S."/>
            <person name="Weng S."/>
            <person name="Wong E.D."/>
            <person name="Lloyd P."/>
            <person name="Skrzypek M.S."/>
            <person name="Miyasato S.R."/>
            <person name="Simison M."/>
            <person name="Cherry J.M."/>
        </authorList>
    </citation>
    <scope>GENOME REANNOTATION</scope>
    <source>
        <strain>ATCC 204508 / S288c</strain>
    </source>
</reference>
<reference key="4">
    <citation type="journal article" date="1998" name="Yeast">
        <title>The list of cytoplasmic ribosomal proteins of Saccharomyces cerevisiae.</title>
        <authorList>
            <person name="Planta R.J."/>
            <person name="Mager W.H."/>
        </authorList>
    </citation>
    <scope>NOMENCLATURE</scope>
    <scope>SUBUNIT</scope>
</reference>
<reference key="5">
    <citation type="journal article" date="2002" name="Proc. Natl. Acad. Sci. U.S.A.">
        <title>Direct mass spectrometric analysis of intact proteins of the yeast large ribosomal subunit using capillary LC/FTICR.</title>
        <authorList>
            <person name="Lee S.-W."/>
            <person name="Berger S.J."/>
            <person name="Martinovic S."/>
            <person name="Pasa-Tolic L."/>
            <person name="Anderson G.A."/>
            <person name="Shen Y."/>
            <person name="Zhao R."/>
            <person name="Smith R.D."/>
        </authorList>
    </citation>
    <scope>MASS SPECTROMETRY</scope>
    <scope>CLEAVAGE OF INITIATOR METHIONINE</scope>
</reference>
<reference key="6">
    <citation type="journal article" date="2003" name="Nature">
        <title>Global analysis of protein localization in budding yeast.</title>
        <authorList>
            <person name="Huh W.-K."/>
            <person name="Falvo J.V."/>
            <person name="Gerke L.C."/>
            <person name="Carroll A.S."/>
            <person name="Howson R.W."/>
            <person name="Weissman J.S."/>
            <person name="O'Shea E.K."/>
        </authorList>
    </citation>
    <scope>SUBCELLULAR LOCATION [LARGE SCALE ANALYSIS]</scope>
</reference>
<reference key="7">
    <citation type="journal article" date="2003" name="Nature">
        <title>Global analysis of protein expression in yeast.</title>
        <authorList>
            <person name="Ghaemmaghami S."/>
            <person name="Huh W.-K."/>
            <person name="Bower K."/>
            <person name="Howson R.W."/>
            <person name="Belle A."/>
            <person name="Dephoure N."/>
            <person name="O'Shea E.K."/>
            <person name="Weissman J.S."/>
        </authorList>
    </citation>
    <scope>LEVEL OF PROTEIN EXPRESSION [LARGE SCALE ANALYSIS]</scope>
</reference>
<reference key="8">
    <citation type="journal article" date="2007" name="Proc. Natl. Acad. Sci. U.S.A.">
        <title>Analysis of phosphorylation sites on proteins from Saccharomyces cerevisiae by electron transfer dissociation (ETD) mass spectrometry.</title>
        <authorList>
            <person name="Chi A."/>
            <person name="Huttenhower C."/>
            <person name="Geer L.Y."/>
            <person name="Coon J.J."/>
            <person name="Syka J.E.P."/>
            <person name="Bai D.L."/>
            <person name="Shabanowitz J."/>
            <person name="Burke D.J."/>
            <person name="Troyanskaya O.G."/>
            <person name="Hunt D.F."/>
        </authorList>
    </citation>
    <scope>PHOSPHORYLATION [LARGE SCALE ANALYSIS] AT SER-40</scope>
    <scope>IDENTIFICATION BY MASS SPECTROMETRY [LARGE SCALE ANALYSIS]</scope>
</reference>
<reference key="9">
    <citation type="journal article" date="2014" name="Curr. Opin. Struct. Biol.">
        <title>A new system for naming ribosomal proteins.</title>
        <authorList>
            <person name="Ban N."/>
            <person name="Beckmann R."/>
            <person name="Cate J.H.D."/>
            <person name="Dinman J.D."/>
            <person name="Dragon F."/>
            <person name="Ellis S.R."/>
            <person name="Lafontaine D.L.J."/>
            <person name="Lindahl L."/>
            <person name="Liljas A."/>
            <person name="Lipton J.M."/>
            <person name="McAlear M.A."/>
            <person name="Moore P.B."/>
            <person name="Noller H.F."/>
            <person name="Ortega J."/>
            <person name="Panse V.G."/>
            <person name="Ramakrishnan V."/>
            <person name="Spahn C.M.T."/>
            <person name="Steitz T.A."/>
            <person name="Tchorzewski M."/>
            <person name="Tollervey D."/>
            <person name="Warren A.J."/>
            <person name="Williamson J.R."/>
            <person name="Wilson D."/>
            <person name="Yonath A."/>
            <person name="Yusupov M."/>
        </authorList>
    </citation>
    <scope>NOMENCLATURE</scope>
</reference>
<reference key="10">
    <citation type="journal article" date="2001" name="Cell">
        <title>Structure of the 80S ribosome from Saccharomyces cerevisiae -- tRNA-ribosome and subunit-subunit interactions.</title>
        <authorList>
            <person name="Spahn C.M.T."/>
            <person name="Beckmann R."/>
            <person name="Eswar N."/>
            <person name="Penczek P.A."/>
            <person name="Sali A."/>
            <person name="Blobel G."/>
            <person name="Frank J."/>
        </authorList>
    </citation>
    <scope>3D-STRUCTURE MODELING OF 10-82</scope>
    <scope>ELECTRON MICROSCOPY</scope>
</reference>
<reference key="11">
    <citation type="journal article" date="2004" name="EMBO J.">
        <title>Domain movements of elongation factor eEF2 and the eukaryotic 80S ribosome facilitate tRNA translocation.</title>
        <authorList>
            <person name="Spahn C.M.T."/>
            <person name="Gomez-Lorenzo M.G."/>
            <person name="Grassucci R.A."/>
            <person name="Joergensen R."/>
            <person name="Andersen G.R."/>
            <person name="Beckmann R."/>
            <person name="Penczek P.A."/>
            <person name="Ballesta J.P.G."/>
            <person name="Frank J."/>
        </authorList>
    </citation>
    <scope>3D-STRUCTURE MODELING</scope>
    <scope>ELECTRON MICROSCOPY</scope>
</reference>
<reference key="12">
    <citation type="journal article" date="2010" name="Science">
        <title>Crystal structure of the eukaryotic ribosome.</title>
        <authorList>
            <person name="Ben-Shem A."/>
            <person name="Jenner L."/>
            <person name="Yusupova G."/>
            <person name="Yusupov M."/>
        </authorList>
    </citation>
    <scope>X-RAY CRYSTALLOGRAPHY (4.0 ANGSTROMS) OF 80S RIBOSOME</scope>
</reference>
<reference key="13">
    <citation type="journal article" date="2011" name="Science">
        <title>The structure of the eukaryotic ribosome at 3.0 A resolution.</title>
        <authorList>
            <person name="Ben-Shem A."/>
            <person name="Garreau de Loubresse N."/>
            <person name="Melnikov S."/>
            <person name="Jenner L."/>
            <person name="Yusupova G."/>
            <person name="Yusupov M."/>
        </authorList>
    </citation>
    <scope>X-RAY CRYSTALLOGRAPHY (3.0 ANGSTROMS) OF 80S RIBOSOME</scope>
    <scope>SUBUNIT</scope>
    <scope>SUBCELLULAR LOCATION</scope>
</reference>
<accession>P0CX25</accession>
<accession>D6VWR3</accession>
<accession>P49631</accession>
<protein>
    <recommendedName>
        <fullName evidence="5">Large ribosomal subunit protein eL43A</fullName>
    </recommendedName>
    <alternativeName>
        <fullName evidence="6">60S ribosomal protein L43-A</fullName>
    </alternativeName>
    <alternativeName>
        <fullName>L37a</fullName>
    </alternativeName>
    <alternativeName>
        <fullName>YL35</fullName>
    </alternativeName>
</protein>